<sequence length="171" mass="20151">MKVFLGLLLGYSTILILTYQSPTTQHPPKEELEYWCTYAKTCDFCWDCQNDTCINKVINESISMNSIVNCRVTRDSQSQSCFYEISLKIPNYHSMECSYPRLYKHFMSMEKWRDENWPILIRHYCFYLVFSFAFAGCVAFAICKNLRLRTTMKLLMLLSILVLLSQPILNN</sequence>
<gene>
    <name type="ordered locus">Mal-017</name>
</gene>
<organism>
    <name type="scientific">African swine fever virus (isolate Tick/Malawi/Lil 20-1/1983)</name>
    <name type="common">ASFV</name>
    <dbReference type="NCBI Taxonomy" id="10500"/>
    <lineage>
        <taxon>Viruses</taxon>
        <taxon>Varidnaviria</taxon>
        <taxon>Bamfordvirae</taxon>
        <taxon>Nucleocytoviricota</taxon>
        <taxon>Pokkesviricetes</taxon>
        <taxon>Asfuvirales</taxon>
        <taxon>Asfarviridae</taxon>
        <taxon>Asfivirus</taxon>
        <taxon>African swine fever virus</taxon>
    </lineage>
</organism>
<keyword id="KW-1043">Host membrane</keyword>
<keyword id="KW-0472">Membrane</keyword>
<keyword id="KW-0812">Transmembrane</keyword>
<keyword id="KW-1133">Transmembrane helix</keyword>
<comment type="function">
    <text evidence="1">Plays a role in virus cell tropism, and may be required for efficient virus replication in macrophages.</text>
</comment>
<comment type="subcellular location">
    <subcellularLocation>
        <location evidence="3">Host membrane</location>
        <topology evidence="3">Multi-pass membrane protein</topology>
    </subcellularLocation>
</comment>
<comment type="similarity">
    <text evidence="3">Belongs to the asfivirus MGF 110 family.</text>
</comment>
<proteinExistence type="inferred from homology"/>
<accession>P0C9J9</accession>
<protein>
    <recommendedName>
        <fullName>Protein MGF 110-12L</fullName>
    </recommendedName>
</protein>
<organismHost>
    <name type="scientific">Ornithodoros</name>
    <name type="common">relapsing fever ticks</name>
    <dbReference type="NCBI Taxonomy" id="6937"/>
</organismHost>
<organismHost>
    <name type="scientific">Phacochoerus aethiopicus</name>
    <name type="common">Warthog</name>
    <dbReference type="NCBI Taxonomy" id="85517"/>
</organismHost>
<organismHost>
    <name type="scientific">Phacochoerus africanus</name>
    <name type="common">Warthog</name>
    <dbReference type="NCBI Taxonomy" id="41426"/>
</organismHost>
<organismHost>
    <name type="scientific">Potamochoerus larvatus</name>
    <name type="common">Bushpig</name>
    <dbReference type="NCBI Taxonomy" id="273792"/>
</organismHost>
<organismHost>
    <name type="scientific">Sus scrofa</name>
    <name type="common">Pig</name>
    <dbReference type="NCBI Taxonomy" id="9823"/>
</organismHost>
<evidence type="ECO:0000250" key="1"/>
<evidence type="ECO:0000255" key="2"/>
<evidence type="ECO:0000305" key="3"/>
<name>11012_ASFM2</name>
<feature type="chain" id="PRO_0000373221" description="Protein MGF 110-12L">
    <location>
        <begin position="1"/>
        <end position="171"/>
    </location>
</feature>
<feature type="transmembrane region" description="Helical" evidence="2">
    <location>
        <begin position="2"/>
        <end position="20"/>
    </location>
</feature>
<feature type="transmembrane region" description="Helical" evidence="2">
    <location>
        <begin position="123"/>
        <end position="143"/>
    </location>
</feature>
<feature type="transmembrane region" description="Helical" evidence="2">
    <location>
        <begin position="150"/>
        <end position="170"/>
    </location>
</feature>
<dbReference type="EMBL" id="AY261361">
    <property type="status" value="NOT_ANNOTATED_CDS"/>
    <property type="molecule type" value="Genomic_DNA"/>
</dbReference>
<dbReference type="SMR" id="P0C9J9"/>
<dbReference type="Proteomes" id="UP000000860">
    <property type="component" value="Segment"/>
</dbReference>
<dbReference type="GO" id="GO:0033644">
    <property type="term" value="C:host cell membrane"/>
    <property type="evidence" value="ECO:0007669"/>
    <property type="project" value="UniProtKB-SubCell"/>
</dbReference>
<dbReference type="GO" id="GO:0016020">
    <property type="term" value="C:membrane"/>
    <property type="evidence" value="ECO:0007669"/>
    <property type="project" value="UniProtKB-KW"/>
</dbReference>
<dbReference type="InterPro" id="IPR004848">
    <property type="entry name" value="ASFV_fam_110"/>
</dbReference>
<dbReference type="Pfam" id="PF01639">
    <property type="entry name" value="v110"/>
    <property type="match status" value="1"/>
</dbReference>
<reference key="1">
    <citation type="submission" date="2003-03" db="EMBL/GenBank/DDBJ databases">
        <title>African swine fever virus genomes.</title>
        <authorList>
            <person name="Kutish G.F."/>
            <person name="Rock D.L."/>
        </authorList>
    </citation>
    <scope>NUCLEOTIDE SEQUENCE [LARGE SCALE GENOMIC DNA]</scope>
</reference>